<proteinExistence type="inferred from homology"/>
<comment type="function">
    <text evidence="1">Catalyzes the conversion of uracil and 5-phospho-alpha-D-ribose 1-diphosphate (PRPP) to UMP and diphosphate.</text>
</comment>
<comment type="catalytic activity">
    <reaction evidence="1">
        <text>UMP + diphosphate = 5-phospho-alpha-D-ribose 1-diphosphate + uracil</text>
        <dbReference type="Rhea" id="RHEA:13017"/>
        <dbReference type="ChEBI" id="CHEBI:17568"/>
        <dbReference type="ChEBI" id="CHEBI:33019"/>
        <dbReference type="ChEBI" id="CHEBI:57865"/>
        <dbReference type="ChEBI" id="CHEBI:58017"/>
        <dbReference type="EC" id="2.4.2.9"/>
    </reaction>
</comment>
<comment type="cofactor">
    <cofactor evidence="1">
        <name>Mg(2+)</name>
        <dbReference type="ChEBI" id="CHEBI:18420"/>
    </cofactor>
    <text evidence="1">Binds 1 Mg(2+) ion per subunit. The magnesium is bound as Mg-PRPP.</text>
</comment>
<comment type="activity regulation">
    <text evidence="1">Allosterically activated by GTP.</text>
</comment>
<comment type="pathway">
    <text evidence="1">Pyrimidine metabolism; UMP biosynthesis via salvage pathway; UMP from uracil: step 1/1.</text>
</comment>
<comment type="similarity">
    <text evidence="1">Belongs to the UPRTase family.</text>
</comment>
<accession>A7ZPU1</accession>
<name>UPP_ECO24</name>
<reference key="1">
    <citation type="journal article" date="2008" name="J. Bacteriol.">
        <title>The pangenome structure of Escherichia coli: comparative genomic analysis of E. coli commensal and pathogenic isolates.</title>
        <authorList>
            <person name="Rasko D.A."/>
            <person name="Rosovitz M.J."/>
            <person name="Myers G.S.A."/>
            <person name="Mongodin E.F."/>
            <person name="Fricke W.F."/>
            <person name="Gajer P."/>
            <person name="Crabtree J."/>
            <person name="Sebaihia M."/>
            <person name="Thomson N.R."/>
            <person name="Chaudhuri R."/>
            <person name="Henderson I.R."/>
            <person name="Sperandio V."/>
            <person name="Ravel J."/>
        </authorList>
    </citation>
    <scope>NUCLEOTIDE SEQUENCE [LARGE SCALE GENOMIC DNA]</scope>
    <source>
        <strain>E24377A / ETEC</strain>
    </source>
</reference>
<organism>
    <name type="scientific">Escherichia coli O139:H28 (strain E24377A / ETEC)</name>
    <dbReference type="NCBI Taxonomy" id="331111"/>
    <lineage>
        <taxon>Bacteria</taxon>
        <taxon>Pseudomonadati</taxon>
        <taxon>Pseudomonadota</taxon>
        <taxon>Gammaproteobacteria</taxon>
        <taxon>Enterobacterales</taxon>
        <taxon>Enterobacteriaceae</taxon>
        <taxon>Escherichia</taxon>
    </lineage>
</organism>
<feature type="chain" id="PRO_1000066728" description="Uracil phosphoribosyltransferase">
    <location>
        <begin position="1"/>
        <end position="208"/>
    </location>
</feature>
<feature type="binding site" evidence="1">
    <location>
        <position position="78"/>
    </location>
    <ligand>
        <name>5-phospho-alpha-D-ribose 1-diphosphate</name>
        <dbReference type="ChEBI" id="CHEBI:58017"/>
    </ligand>
</feature>
<feature type="binding site" evidence="1">
    <location>
        <position position="103"/>
    </location>
    <ligand>
        <name>5-phospho-alpha-D-ribose 1-diphosphate</name>
        <dbReference type="ChEBI" id="CHEBI:58017"/>
    </ligand>
</feature>
<feature type="binding site" evidence="1">
    <location>
        <begin position="130"/>
        <end position="138"/>
    </location>
    <ligand>
        <name>5-phospho-alpha-D-ribose 1-diphosphate</name>
        <dbReference type="ChEBI" id="CHEBI:58017"/>
    </ligand>
</feature>
<feature type="binding site" evidence="1">
    <location>
        <position position="193"/>
    </location>
    <ligand>
        <name>uracil</name>
        <dbReference type="ChEBI" id="CHEBI:17568"/>
    </ligand>
</feature>
<feature type="binding site" evidence="1">
    <location>
        <begin position="198"/>
        <end position="200"/>
    </location>
    <ligand>
        <name>uracil</name>
        <dbReference type="ChEBI" id="CHEBI:17568"/>
    </ligand>
</feature>
<feature type="binding site" evidence="1">
    <location>
        <position position="199"/>
    </location>
    <ligand>
        <name>5-phospho-alpha-D-ribose 1-diphosphate</name>
        <dbReference type="ChEBI" id="CHEBI:58017"/>
    </ligand>
</feature>
<protein>
    <recommendedName>
        <fullName evidence="1">Uracil phosphoribosyltransferase</fullName>
        <ecNumber evidence="1">2.4.2.9</ecNumber>
    </recommendedName>
    <alternativeName>
        <fullName evidence="1">UMP pyrophosphorylase</fullName>
    </alternativeName>
    <alternativeName>
        <fullName evidence="1">UPRTase</fullName>
    </alternativeName>
</protein>
<evidence type="ECO:0000255" key="1">
    <source>
        <dbReference type="HAMAP-Rule" id="MF_01218"/>
    </source>
</evidence>
<gene>
    <name evidence="1" type="primary">upp</name>
    <name type="ordered locus">EcE24377A_2781</name>
</gene>
<dbReference type="EC" id="2.4.2.9" evidence="1"/>
<dbReference type="EMBL" id="CP000800">
    <property type="protein sequence ID" value="ABV16878.1"/>
    <property type="molecule type" value="Genomic_DNA"/>
</dbReference>
<dbReference type="RefSeq" id="WP_001295473.1">
    <property type="nucleotide sequence ID" value="NC_009801.1"/>
</dbReference>
<dbReference type="SMR" id="A7ZPU1"/>
<dbReference type="GeneID" id="93774638"/>
<dbReference type="KEGG" id="ecw:EcE24377A_2781"/>
<dbReference type="HOGENOM" id="CLU_067096_2_2_6"/>
<dbReference type="UniPathway" id="UPA00574">
    <property type="reaction ID" value="UER00636"/>
</dbReference>
<dbReference type="Proteomes" id="UP000001122">
    <property type="component" value="Chromosome"/>
</dbReference>
<dbReference type="GO" id="GO:0005525">
    <property type="term" value="F:GTP binding"/>
    <property type="evidence" value="ECO:0007669"/>
    <property type="project" value="UniProtKB-KW"/>
</dbReference>
<dbReference type="GO" id="GO:0000287">
    <property type="term" value="F:magnesium ion binding"/>
    <property type="evidence" value="ECO:0007669"/>
    <property type="project" value="UniProtKB-UniRule"/>
</dbReference>
<dbReference type="GO" id="GO:0004845">
    <property type="term" value="F:uracil phosphoribosyltransferase activity"/>
    <property type="evidence" value="ECO:0007669"/>
    <property type="project" value="UniProtKB-UniRule"/>
</dbReference>
<dbReference type="GO" id="GO:0044206">
    <property type="term" value="P:UMP salvage"/>
    <property type="evidence" value="ECO:0007669"/>
    <property type="project" value="UniProtKB-UniRule"/>
</dbReference>
<dbReference type="GO" id="GO:0006223">
    <property type="term" value="P:uracil salvage"/>
    <property type="evidence" value="ECO:0007669"/>
    <property type="project" value="InterPro"/>
</dbReference>
<dbReference type="CDD" id="cd06223">
    <property type="entry name" value="PRTases_typeI"/>
    <property type="match status" value="1"/>
</dbReference>
<dbReference type="FunFam" id="3.40.50.2020:FF:000003">
    <property type="entry name" value="Uracil phosphoribosyltransferase"/>
    <property type="match status" value="1"/>
</dbReference>
<dbReference type="Gene3D" id="3.40.50.2020">
    <property type="match status" value="1"/>
</dbReference>
<dbReference type="HAMAP" id="MF_01218_B">
    <property type="entry name" value="Upp_B"/>
    <property type="match status" value="1"/>
</dbReference>
<dbReference type="InterPro" id="IPR000836">
    <property type="entry name" value="PRibTrfase_dom"/>
</dbReference>
<dbReference type="InterPro" id="IPR029057">
    <property type="entry name" value="PRTase-like"/>
</dbReference>
<dbReference type="InterPro" id="IPR034332">
    <property type="entry name" value="Upp_B"/>
</dbReference>
<dbReference type="InterPro" id="IPR050054">
    <property type="entry name" value="UPRTase/APRTase"/>
</dbReference>
<dbReference type="InterPro" id="IPR005765">
    <property type="entry name" value="Ura_phspho_trans"/>
</dbReference>
<dbReference type="NCBIfam" id="NF001097">
    <property type="entry name" value="PRK00129.1"/>
    <property type="match status" value="1"/>
</dbReference>
<dbReference type="NCBIfam" id="TIGR01091">
    <property type="entry name" value="upp"/>
    <property type="match status" value="1"/>
</dbReference>
<dbReference type="PANTHER" id="PTHR32315">
    <property type="entry name" value="ADENINE PHOSPHORIBOSYLTRANSFERASE"/>
    <property type="match status" value="1"/>
</dbReference>
<dbReference type="PANTHER" id="PTHR32315:SF4">
    <property type="entry name" value="URACIL PHOSPHORIBOSYLTRANSFERASE, CHLOROPLASTIC"/>
    <property type="match status" value="1"/>
</dbReference>
<dbReference type="Pfam" id="PF14681">
    <property type="entry name" value="UPRTase"/>
    <property type="match status" value="1"/>
</dbReference>
<dbReference type="SUPFAM" id="SSF53271">
    <property type="entry name" value="PRTase-like"/>
    <property type="match status" value="1"/>
</dbReference>
<keyword id="KW-0021">Allosteric enzyme</keyword>
<keyword id="KW-0328">Glycosyltransferase</keyword>
<keyword id="KW-0342">GTP-binding</keyword>
<keyword id="KW-0460">Magnesium</keyword>
<keyword id="KW-0547">Nucleotide-binding</keyword>
<keyword id="KW-1185">Reference proteome</keyword>
<keyword id="KW-0808">Transferase</keyword>
<sequence>MKIVEVKHPLVKHKLGLMREQDISTKRFRELASEVGSLLTYEATADLETEKVTIEGWNGPVEIDQIKGKKITVVPILRAGLGMMDGVLENVPSARISVVGMYRNEETLEPVPYFQKLVSNIDERMALIVDPMLATGGSVIATIDLLKKAGCSSIKVLVLVAAPEGIAALEKAHPDVELYTASIDQGLNEHGYIIPGLGDAGDKIFGTK</sequence>